<comment type="function">
    <text evidence="3 6">Rhomboid-type serine protease that catalyzes intramembrane proteolysis. Can cleave the Drosophila proteins Spitz and Keren (PubMed:16223493). May function in pollen elongation (PubMed:22007993).</text>
</comment>
<comment type="catalytic activity">
    <reaction evidence="3">
        <text>Cleaves type-1 transmembrane domains using a catalytic dyad composed of serine and histidine that are contributed by different transmembrane domains.</text>
        <dbReference type="EC" id="3.4.21.105"/>
    </reaction>
</comment>
<comment type="subcellular location">
    <subcellularLocation>
        <location evidence="3">Golgi apparatus membrane</location>
        <topology evidence="2">Multi-pass membrane protein</topology>
    </subcellularLocation>
</comment>
<comment type="tissue specificity">
    <text evidence="3">Expressed in roots, seedlings, leaves, stems and flowers.</text>
</comment>
<comment type="disruption phenotype">
    <text evidence="8">No visible phenotype.</text>
</comment>
<comment type="similarity">
    <text evidence="7">Belongs to the peptidase S54 family.</text>
</comment>
<dbReference type="EC" id="3.4.21.105" evidence="3"/>
<dbReference type="EMBL" id="AB195671">
    <property type="protein sequence ID" value="BAE46871.1"/>
    <property type="molecule type" value="mRNA"/>
</dbReference>
<dbReference type="EMBL" id="AC010795">
    <property type="protein sequence ID" value="AAG51610.1"/>
    <property type="molecule type" value="Genomic_DNA"/>
</dbReference>
<dbReference type="EMBL" id="CP002684">
    <property type="protein sequence ID" value="AEE34058.1"/>
    <property type="molecule type" value="Genomic_DNA"/>
</dbReference>
<dbReference type="EMBL" id="BT004076">
    <property type="protein sequence ID" value="AAO42103.1"/>
    <property type="molecule type" value="mRNA"/>
</dbReference>
<dbReference type="EMBL" id="BT005121">
    <property type="protein sequence ID" value="AAO50654.1"/>
    <property type="molecule type" value="mRNA"/>
</dbReference>
<dbReference type="PIR" id="F96656">
    <property type="entry name" value="F96656"/>
</dbReference>
<dbReference type="RefSeq" id="NP_176500.1">
    <property type="nucleotide sequence ID" value="NM_104990.4"/>
</dbReference>
<dbReference type="SMR" id="Q9CAN1"/>
<dbReference type="FunCoup" id="Q9CAN1">
    <property type="interactions" value="303"/>
</dbReference>
<dbReference type="IntAct" id="Q9CAN1">
    <property type="interactions" value="35"/>
</dbReference>
<dbReference type="STRING" id="3702.Q9CAN1"/>
<dbReference type="MEROPS" id="S54.015"/>
<dbReference type="PaxDb" id="3702-AT1G63120.1"/>
<dbReference type="ProteomicsDB" id="236491"/>
<dbReference type="EnsemblPlants" id="AT1G63120.1">
    <property type="protein sequence ID" value="AT1G63120.1"/>
    <property type="gene ID" value="AT1G63120"/>
</dbReference>
<dbReference type="GeneID" id="842616"/>
<dbReference type="Gramene" id="AT1G63120.1">
    <property type="protein sequence ID" value="AT1G63120.1"/>
    <property type="gene ID" value="AT1G63120"/>
</dbReference>
<dbReference type="KEGG" id="ath:AT1G63120"/>
<dbReference type="Araport" id="AT1G63120"/>
<dbReference type="TAIR" id="AT1G63120">
    <property type="gene designation" value="RBL2"/>
</dbReference>
<dbReference type="eggNOG" id="KOG2289">
    <property type="taxonomic scope" value="Eukaryota"/>
</dbReference>
<dbReference type="HOGENOM" id="CLU_011531_0_0_1"/>
<dbReference type="InParanoid" id="Q9CAN1"/>
<dbReference type="OMA" id="KITGPNK"/>
<dbReference type="PhylomeDB" id="Q9CAN1"/>
<dbReference type="PRO" id="PR:Q9CAN1"/>
<dbReference type="Proteomes" id="UP000006548">
    <property type="component" value="Chromosome 1"/>
</dbReference>
<dbReference type="ExpressionAtlas" id="Q9CAN1">
    <property type="expression patterns" value="baseline and differential"/>
</dbReference>
<dbReference type="GO" id="GO:0005794">
    <property type="term" value="C:Golgi apparatus"/>
    <property type="evidence" value="ECO:0000314"/>
    <property type="project" value="TAIR"/>
</dbReference>
<dbReference type="GO" id="GO:0000139">
    <property type="term" value="C:Golgi membrane"/>
    <property type="evidence" value="ECO:0007669"/>
    <property type="project" value="UniProtKB-SubCell"/>
</dbReference>
<dbReference type="GO" id="GO:0009506">
    <property type="term" value="C:plasmodesma"/>
    <property type="evidence" value="ECO:0007005"/>
    <property type="project" value="TAIR"/>
</dbReference>
<dbReference type="GO" id="GO:0004252">
    <property type="term" value="F:serine-type endopeptidase activity"/>
    <property type="evidence" value="ECO:0000314"/>
    <property type="project" value="TAIR"/>
</dbReference>
<dbReference type="GO" id="GO:0006508">
    <property type="term" value="P:proteolysis"/>
    <property type="evidence" value="ECO:0007669"/>
    <property type="project" value="UniProtKB-KW"/>
</dbReference>
<dbReference type="FunFam" id="1.20.1540.10:FF:000019">
    <property type="entry name" value="RHOMBOID-like protein"/>
    <property type="match status" value="1"/>
</dbReference>
<dbReference type="Gene3D" id="1.20.1540.10">
    <property type="entry name" value="Rhomboid-like"/>
    <property type="match status" value="1"/>
</dbReference>
<dbReference type="InterPro" id="IPR002610">
    <property type="entry name" value="Peptidase_S54_rhomboid-like"/>
</dbReference>
<dbReference type="InterPro" id="IPR022764">
    <property type="entry name" value="Peptidase_S54_rhomboid_dom"/>
</dbReference>
<dbReference type="InterPro" id="IPR035952">
    <property type="entry name" value="Rhomboid-like_sf"/>
</dbReference>
<dbReference type="PANTHER" id="PTHR22936:SF73">
    <property type="entry name" value="RHOMBOID-LIKE PROTEIN 2"/>
    <property type="match status" value="1"/>
</dbReference>
<dbReference type="PANTHER" id="PTHR22936">
    <property type="entry name" value="RHOMBOID-RELATED"/>
    <property type="match status" value="1"/>
</dbReference>
<dbReference type="Pfam" id="PF01694">
    <property type="entry name" value="Rhomboid"/>
    <property type="match status" value="1"/>
</dbReference>
<dbReference type="SUPFAM" id="SSF144091">
    <property type="entry name" value="Rhomboid-like"/>
    <property type="match status" value="1"/>
</dbReference>
<keyword id="KW-0333">Golgi apparatus</keyword>
<keyword id="KW-0378">Hydrolase</keyword>
<keyword id="KW-0472">Membrane</keyword>
<keyword id="KW-0645">Protease</keyword>
<keyword id="KW-1185">Reference proteome</keyword>
<keyword id="KW-0720">Serine protease</keyword>
<keyword id="KW-0812">Transmembrane</keyword>
<keyword id="KW-1133">Transmembrane helix</keyword>
<proteinExistence type="evidence at protein level"/>
<gene>
    <name evidence="4 5" type="primary">RBL2</name>
    <name evidence="9" type="ordered locus">At1g63120</name>
    <name evidence="10" type="ORF">F16M19.4</name>
</gene>
<protein>
    <recommendedName>
        <fullName evidence="4 5">RHOMBOID-like protein 2</fullName>
        <shortName evidence="4 5">AtRBL2</shortName>
        <ecNumber evidence="3">3.4.21.105</ecNumber>
    </recommendedName>
</protein>
<name>RBL2_ARATH</name>
<organism evidence="11">
    <name type="scientific">Arabidopsis thaliana</name>
    <name type="common">Mouse-ear cress</name>
    <dbReference type="NCBI Taxonomy" id="3702"/>
    <lineage>
        <taxon>Eukaryota</taxon>
        <taxon>Viridiplantae</taxon>
        <taxon>Streptophyta</taxon>
        <taxon>Embryophyta</taxon>
        <taxon>Tracheophyta</taxon>
        <taxon>Spermatophyta</taxon>
        <taxon>Magnoliopsida</taxon>
        <taxon>eudicotyledons</taxon>
        <taxon>Gunneridae</taxon>
        <taxon>Pentapetalae</taxon>
        <taxon>rosids</taxon>
        <taxon>malvids</taxon>
        <taxon>Brassicales</taxon>
        <taxon>Brassicaceae</taxon>
        <taxon>Camelineae</taxon>
        <taxon>Arabidopsis</taxon>
    </lineage>
</organism>
<evidence type="ECO:0000250" key="1">
    <source>
        <dbReference type="UniProtKB" id="P54493"/>
    </source>
</evidence>
<evidence type="ECO:0000255" key="2"/>
<evidence type="ECO:0000269" key="3">
    <source>
    </source>
</evidence>
<evidence type="ECO:0000303" key="4">
    <source>
    </source>
</evidence>
<evidence type="ECO:0000303" key="5">
    <source>
    </source>
</evidence>
<evidence type="ECO:0000303" key="6">
    <source>
    </source>
</evidence>
<evidence type="ECO:0000305" key="7"/>
<evidence type="ECO:0000305" key="8">
    <source>
    </source>
</evidence>
<evidence type="ECO:0000312" key="9">
    <source>
        <dbReference type="Araport" id="AT1G63120"/>
    </source>
</evidence>
<evidence type="ECO:0000312" key="10">
    <source>
        <dbReference type="EMBL" id="AAG51610.1"/>
    </source>
</evidence>
<evidence type="ECO:0000312" key="11">
    <source>
        <dbReference type="Proteomes" id="UP000006548"/>
    </source>
</evidence>
<reference key="1">
    <citation type="journal article" date="2005" name="FEBS Lett.">
        <title>An Arabidopsis Rhomboid homolog is an intramembrane protease in plants.</title>
        <authorList>
            <person name="Kanaoka M.M."/>
            <person name="Urban S."/>
            <person name="Freeman M."/>
            <person name="Okada K."/>
        </authorList>
    </citation>
    <scope>NUCLEOTIDE SEQUENCE [MRNA]</scope>
    <scope>GENE FAMILY</scope>
    <scope>NOMENCLATURE</scope>
    <scope>TISSUE SPECIFICITY</scope>
    <scope>SUBCELLULAR LOCATION</scope>
    <scope>FUNCTION</scope>
    <scope>CATALYTIC ACTIVITY</scope>
    <scope>DISRUPTION PHENOTYPE</scope>
    <source>
        <strain>cv. Columbia</strain>
    </source>
</reference>
<reference key="2">
    <citation type="journal article" date="2000" name="Nature">
        <title>Sequence and analysis of chromosome 1 of the plant Arabidopsis thaliana.</title>
        <authorList>
            <person name="Theologis A."/>
            <person name="Ecker J.R."/>
            <person name="Palm C.J."/>
            <person name="Federspiel N.A."/>
            <person name="Kaul S."/>
            <person name="White O."/>
            <person name="Alonso J."/>
            <person name="Altafi H."/>
            <person name="Araujo R."/>
            <person name="Bowman C.L."/>
            <person name="Brooks S.Y."/>
            <person name="Buehler E."/>
            <person name="Chan A."/>
            <person name="Chao Q."/>
            <person name="Chen H."/>
            <person name="Cheuk R.F."/>
            <person name="Chin C.W."/>
            <person name="Chung M.K."/>
            <person name="Conn L."/>
            <person name="Conway A.B."/>
            <person name="Conway A.R."/>
            <person name="Creasy T.H."/>
            <person name="Dewar K."/>
            <person name="Dunn P."/>
            <person name="Etgu P."/>
            <person name="Feldblyum T.V."/>
            <person name="Feng J.-D."/>
            <person name="Fong B."/>
            <person name="Fujii C.Y."/>
            <person name="Gill J.E."/>
            <person name="Goldsmith A.D."/>
            <person name="Haas B."/>
            <person name="Hansen N.F."/>
            <person name="Hughes B."/>
            <person name="Huizar L."/>
            <person name="Hunter J.L."/>
            <person name="Jenkins J."/>
            <person name="Johnson-Hopson C."/>
            <person name="Khan S."/>
            <person name="Khaykin E."/>
            <person name="Kim C.J."/>
            <person name="Koo H.L."/>
            <person name="Kremenetskaia I."/>
            <person name="Kurtz D.B."/>
            <person name="Kwan A."/>
            <person name="Lam B."/>
            <person name="Langin-Hooper S."/>
            <person name="Lee A."/>
            <person name="Lee J.M."/>
            <person name="Lenz C.A."/>
            <person name="Li J.H."/>
            <person name="Li Y.-P."/>
            <person name="Lin X."/>
            <person name="Liu S.X."/>
            <person name="Liu Z.A."/>
            <person name="Luros J.S."/>
            <person name="Maiti R."/>
            <person name="Marziali A."/>
            <person name="Militscher J."/>
            <person name="Miranda M."/>
            <person name="Nguyen M."/>
            <person name="Nierman W.C."/>
            <person name="Osborne B.I."/>
            <person name="Pai G."/>
            <person name="Peterson J."/>
            <person name="Pham P.K."/>
            <person name="Rizzo M."/>
            <person name="Rooney T."/>
            <person name="Rowley D."/>
            <person name="Sakano H."/>
            <person name="Salzberg S.L."/>
            <person name="Schwartz J.R."/>
            <person name="Shinn P."/>
            <person name="Southwick A.M."/>
            <person name="Sun H."/>
            <person name="Tallon L.J."/>
            <person name="Tambunga G."/>
            <person name="Toriumi M.J."/>
            <person name="Town C.D."/>
            <person name="Utterback T."/>
            <person name="Van Aken S."/>
            <person name="Vaysberg M."/>
            <person name="Vysotskaia V.S."/>
            <person name="Walker M."/>
            <person name="Wu D."/>
            <person name="Yu G."/>
            <person name="Fraser C.M."/>
            <person name="Venter J.C."/>
            <person name="Davis R.W."/>
        </authorList>
    </citation>
    <scope>NUCLEOTIDE SEQUENCE [LARGE SCALE GENOMIC DNA]</scope>
    <source>
        <strain>cv. Columbia</strain>
    </source>
</reference>
<reference key="3">
    <citation type="journal article" date="2017" name="Plant J.">
        <title>Araport11: a complete reannotation of the Arabidopsis thaliana reference genome.</title>
        <authorList>
            <person name="Cheng C.Y."/>
            <person name="Krishnakumar V."/>
            <person name="Chan A.P."/>
            <person name="Thibaud-Nissen F."/>
            <person name="Schobel S."/>
            <person name="Town C.D."/>
        </authorList>
    </citation>
    <scope>GENOME REANNOTATION</scope>
    <source>
        <strain>cv. Columbia</strain>
    </source>
</reference>
<reference key="4">
    <citation type="journal article" date="2003" name="Science">
        <title>Empirical analysis of transcriptional activity in the Arabidopsis genome.</title>
        <authorList>
            <person name="Yamada K."/>
            <person name="Lim J."/>
            <person name="Dale J.M."/>
            <person name="Chen H."/>
            <person name="Shinn P."/>
            <person name="Palm C.J."/>
            <person name="Southwick A.M."/>
            <person name="Wu H.C."/>
            <person name="Kim C.J."/>
            <person name="Nguyen M."/>
            <person name="Pham P.K."/>
            <person name="Cheuk R.F."/>
            <person name="Karlin-Newmann G."/>
            <person name="Liu S.X."/>
            <person name="Lam B."/>
            <person name="Sakano H."/>
            <person name="Wu T."/>
            <person name="Yu G."/>
            <person name="Miranda M."/>
            <person name="Quach H.L."/>
            <person name="Tripp M."/>
            <person name="Chang C.H."/>
            <person name="Lee J.M."/>
            <person name="Toriumi M.J."/>
            <person name="Chan M.M."/>
            <person name="Tang C.C."/>
            <person name="Onodera C.S."/>
            <person name="Deng J.M."/>
            <person name="Akiyama K."/>
            <person name="Ansari Y."/>
            <person name="Arakawa T."/>
            <person name="Banh J."/>
            <person name="Banno F."/>
            <person name="Bowser L."/>
            <person name="Brooks S.Y."/>
            <person name="Carninci P."/>
            <person name="Chao Q."/>
            <person name="Choy N."/>
            <person name="Enju A."/>
            <person name="Goldsmith A.D."/>
            <person name="Gurjal M."/>
            <person name="Hansen N.F."/>
            <person name="Hayashizaki Y."/>
            <person name="Johnson-Hopson C."/>
            <person name="Hsuan V.W."/>
            <person name="Iida K."/>
            <person name="Karnes M."/>
            <person name="Khan S."/>
            <person name="Koesema E."/>
            <person name="Ishida J."/>
            <person name="Jiang P.X."/>
            <person name="Jones T."/>
            <person name="Kawai J."/>
            <person name="Kamiya A."/>
            <person name="Meyers C."/>
            <person name="Nakajima M."/>
            <person name="Narusaka M."/>
            <person name="Seki M."/>
            <person name="Sakurai T."/>
            <person name="Satou M."/>
            <person name="Tamse R."/>
            <person name="Vaysberg M."/>
            <person name="Wallender E.K."/>
            <person name="Wong C."/>
            <person name="Yamamura Y."/>
            <person name="Yuan S."/>
            <person name="Shinozaki K."/>
            <person name="Davis R.W."/>
            <person name="Theologis A."/>
            <person name="Ecker J.R."/>
        </authorList>
    </citation>
    <scope>NUCLEOTIDE SEQUENCE [LARGE SCALE MRNA]</scope>
    <source>
        <strain>cv. Columbia</strain>
    </source>
</reference>
<reference key="5">
    <citation type="journal article" date="2006" name="BMC Genomics">
        <title>Cross genome comparisons of serine proteases in Arabidopsis and rice.</title>
        <authorList>
            <person name="Tripathi L.P."/>
            <person name="Sowdhamini R."/>
        </authorList>
    </citation>
    <scope>GENE FAMILY</scope>
    <scope>NOMENCLATURE</scope>
</reference>
<reference key="6">
    <citation type="journal article" date="2006" name="BMC Plant Biol.">
        <title>Protease gene families in Populus and Arabidopsis.</title>
        <authorList>
            <person name="Garcia-Lorenzo M."/>
            <person name="Sjodin A."/>
            <person name="Jansson S."/>
            <person name="Funk C."/>
        </authorList>
    </citation>
    <scope>GENE FAMILY</scope>
    <scope>NOMENCLATURE</scope>
</reference>
<reference key="7">
    <citation type="journal article" date="2007" name="Genome Res.">
        <title>Functional and evolutionary implications of enhanced genomic analysis of rhomboid intramembrane proteases.</title>
        <authorList>
            <person name="Lemberg M.K."/>
            <person name="Freeman M."/>
        </authorList>
    </citation>
    <scope>GENE FAMILY</scope>
    <scope>NOMENCLATURE</scope>
</reference>
<reference key="8">
    <citation type="journal article" date="2012" name="Physiol. Plantarum">
        <title>Rhomboid proteases in plants - still in square one?</title>
        <authorList>
            <person name="Knopf R.R."/>
            <person name="Adam Z."/>
        </authorList>
    </citation>
    <scope>REVIEW</scope>
</reference>
<sequence>MANRDVERVGKKNRGANNNYFYEESSGETHWTSWLIPAIVVANLAVFIAVMFVNDCPKKITGPNKECVARFLGRFSFQPLKENPLFGPSSSTLEKMGALEWRKVVHEHQGWRLLSCMWLHAGIIHLLTNMLSLIFIGIRLEQQFGFIRVGLIYLISGLGGSILSSLFLQESISVGASGALFGLLGAMLSELLTNWTIYANKAAALITLLFIIAINLALGMLPRVDNFAHIGGFLTGFCLGFVLLVRPQYGWEASRTNTSRTKRKYSMYQYVLFVVSVVLLVVGLTVALVMLFKGENGNKHCKWCHYLSCFPTSKWTC</sequence>
<accession>Q9CAN1</accession>
<feature type="chain" id="PRO_0000433323" description="RHOMBOID-like protein 2">
    <location>
        <begin position="1"/>
        <end position="317"/>
    </location>
</feature>
<feature type="transmembrane region" description="Helical" evidence="2">
    <location>
        <begin position="33"/>
        <end position="53"/>
    </location>
</feature>
<feature type="transmembrane region" description="Helical" evidence="2">
    <location>
        <begin position="118"/>
        <end position="138"/>
    </location>
</feature>
<feature type="transmembrane region" description="Helical" evidence="2">
    <location>
        <begin position="149"/>
        <end position="169"/>
    </location>
</feature>
<feature type="transmembrane region" description="Helical" evidence="2">
    <location>
        <begin position="172"/>
        <end position="192"/>
    </location>
</feature>
<feature type="transmembrane region" description="Helical" evidence="2">
    <location>
        <begin position="202"/>
        <end position="222"/>
    </location>
</feature>
<feature type="transmembrane region" description="Helical" evidence="2">
    <location>
        <begin position="224"/>
        <end position="244"/>
    </location>
</feature>
<feature type="transmembrane region" description="Helical" evidence="2">
    <location>
        <begin position="272"/>
        <end position="292"/>
    </location>
</feature>
<feature type="active site" description="Nucleophile" evidence="1">
    <location>
        <position position="177"/>
    </location>
</feature>
<feature type="active site" description="Charge relay system" evidence="1">
    <location>
        <position position="229"/>
    </location>
</feature>